<name>THIG_RUEPO</name>
<keyword id="KW-0963">Cytoplasm</keyword>
<keyword id="KW-1185">Reference proteome</keyword>
<keyword id="KW-0704">Schiff base</keyword>
<keyword id="KW-0784">Thiamine biosynthesis</keyword>
<keyword id="KW-0808">Transferase</keyword>
<reference key="1">
    <citation type="journal article" date="2004" name="Nature">
        <title>Genome sequence of Silicibacter pomeroyi reveals adaptations to the marine environment.</title>
        <authorList>
            <person name="Moran M.A."/>
            <person name="Buchan A."/>
            <person name="Gonzalez J.M."/>
            <person name="Heidelberg J.F."/>
            <person name="Whitman W.B."/>
            <person name="Kiene R.P."/>
            <person name="Henriksen J.R."/>
            <person name="King G.M."/>
            <person name="Belas R."/>
            <person name="Fuqua C."/>
            <person name="Brinkac L.M."/>
            <person name="Lewis M."/>
            <person name="Johri S."/>
            <person name="Weaver B."/>
            <person name="Pai G."/>
            <person name="Eisen J.A."/>
            <person name="Rahe E."/>
            <person name="Sheldon W.M."/>
            <person name="Ye W."/>
            <person name="Miller T.R."/>
            <person name="Carlton J."/>
            <person name="Rasko D.A."/>
            <person name="Paulsen I.T."/>
            <person name="Ren Q."/>
            <person name="Daugherty S.C."/>
            <person name="DeBoy R.T."/>
            <person name="Dodson R.J."/>
            <person name="Durkin A.S."/>
            <person name="Madupu R."/>
            <person name="Nelson W.C."/>
            <person name="Sullivan S.A."/>
            <person name="Rosovitz M.J."/>
            <person name="Haft D.H."/>
            <person name="Selengut J."/>
            <person name="Ward N."/>
        </authorList>
    </citation>
    <scope>NUCLEOTIDE SEQUENCE [LARGE SCALE GENOMIC DNA]</scope>
    <source>
        <strain>ATCC 700808 / DSM 15171 / DSS-3</strain>
    </source>
</reference>
<reference key="2">
    <citation type="journal article" date="2014" name="Stand. Genomic Sci.">
        <title>An updated genome annotation for the model marine bacterium Ruegeria pomeroyi DSS-3.</title>
        <authorList>
            <person name="Rivers A.R."/>
            <person name="Smith C.B."/>
            <person name="Moran M.A."/>
        </authorList>
    </citation>
    <scope>GENOME REANNOTATION</scope>
    <source>
        <strain>ATCC 700808 / DSM 15171 / DSS-3</strain>
    </source>
</reference>
<protein>
    <recommendedName>
        <fullName evidence="1">Thiazole synthase</fullName>
        <ecNumber evidence="1">2.8.1.10</ecNumber>
    </recommendedName>
</protein>
<accession>Q5LWJ1</accession>
<feature type="chain" id="PRO_1000196902" description="Thiazole synthase">
    <location>
        <begin position="1"/>
        <end position="254"/>
    </location>
</feature>
<feature type="active site" description="Schiff-base intermediate with DXP" evidence="1">
    <location>
        <position position="93"/>
    </location>
</feature>
<feature type="binding site" evidence="1">
    <location>
        <position position="154"/>
    </location>
    <ligand>
        <name>1-deoxy-D-xylulose 5-phosphate</name>
        <dbReference type="ChEBI" id="CHEBI:57792"/>
    </ligand>
</feature>
<feature type="binding site" evidence="1">
    <location>
        <begin position="181"/>
        <end position="182"/>
    </location>
    <ligand>
        <name>1-deoxy-D-xylulose 5-phosphate</name>
        <dbReference type="ChEBI" id="CHEBI:57792"/>
    </ligand>
</feature>
<feature type="binding site" evidence="1">
    <location>
        <begin position="203"/>
        <end position="204"/>
    </location>
    <ligand>
        <name>1-deoxy-D-xylulose 5-phosphate</name>
        <dbReference type="ChEBI" id="CHEBI:57792"/>
    </ligand>
</feature>
<gene>
    <name evidence="1" type="primary">thiG</name>
    <name type="ordered locus">SPO0047</name>
</gene>
<comment type="function">
    <text evidence="1">Catalyzes the rearrangement of 1-deoxy-D-xylulose 5-phosphate (DXP) to produce the thiazole phosphate moiety of thiamine. Sulfur is provided by the thiocarboxylate moiety of the carrier protein ThiS. In vitro, sulfur can be provided by H(2)S.</text>
</comment>
<comment type="catalytic activity">
    <reaction evidence="1">
        <text>[ThiS sulfur-carrier protein]-C-terminal-Gly-aminoethanethioate + 2-iminoacetate + 1-deoxy-D-xylulose 5-phosphate = [ThiS sulfur-carrier protein]-C-terminal Gly-Gly + 2-[(2R,5Z)-2-carboxy-4-methylthiazol-5(2H)-ylidene]ethyl phosphate + 2 H2O + H(+)</text>
        <dbReference type="Rhea" id="RHEA:26297"/>
        <dbReference type="Rhea" id="RHEA-COMP:12909"/>
        <dbReference type="Rhea" id="RHEA-COMP:19908"/>
        <dbReference type="ChEBI" id="CHEBI:15377"/>
        <dbReference type="ChEBI" id="CHEBI:15378"/>
        <dbReference type="ChEBI" id="CHEBI:57792"/>
        <dbReference type="ChEBI" id="CHEBI:62899"/>
        <dbReference type="ChEBI" id="CHEBI:77846"/>
        <dbReference type="ChEBI" id="CHEBI:90778"/>
        <dbReference type="ChEBI" id="CHEBI:232372"/>
        <dbReference type="EC" id="2.8.1.10"/>
    </reaction>
</comment>
<comment type="pathway">
    <text evidence="1">Cofactor biosynthesis; thiamine diphosphate biosynthesis.</text>
</comment>
<comment type="subunit">
    <text evidence="1">Homotetramer. Forms heterodimers with either ThiH or ThiS.</text>
</comment>
<comment type="subcellular location">
    <subcellularLocation>
        <location evidence="1">Cytoplasm</location>
    </subcellularLocation>
</comment>
<comment type="similarity">
    <text evidence="1">Belongs to the ThiG family.</text>
</comment>
<evidence type="ECO:0000255" key="1">
    <source>
        <dbReference type="HAMAP-Rule" id="MF_00443"/>
    </source>
</evidence>
<organism>
    <name type="scientific">Ruegeria pomeroyi (strain ATCC 700808 / DSM 15171 / DSS-3)</name>
    <name type="common">Silicibacter pomeroyi</name>
    <dbReference type="NCBI Taxonomy" id="246200"/>
    <lineage>
        <taxon>Bacteria</taxon>
        <taxon>Pseudomonadati</taxon>
        <taxon>Pseudomonadota</taxon>
        <taxon>Alphaproteobacteria</taxon>
        <taxon>Rhodobacterales</taxon>
        <taxon>Roseobacteraceae</taxon>
        <taxon>Ruegeria</taxon>
    </lineage>
</organism>
<sequence>MRAFYGTELPNPLMLGTAQYPSPAILEQAFRASGAGVATVSLRRESGAGQTFWSMIRDLGVLILPNTAGCHTVKEAVTTAHMAREVFGTPWIKLELIGHTDSLQPDVFGLIEAARILTEDGFQVFPYTTDDLIVGERLLAAGCEVLMPWGAPIGSGRGLNNEYALRAMRAEFPDTPLVVDAGIGLPSHAARALELGYDAVLLNTAVARAGDPVEMARAMALAIQAGQLAHRADPIEARDMASASTPVIGKAFLS</sequence>
<dbReference type="EC" id="2.8.1.10" evidence="1"/>
<dbReference type="EMBL" id="CP000031">
    <property type="protein sequence ID" value="AAV93378.1"/>
    <property type="molecule type" value="Genomic_DNA"/>
</dbReference>
<dbReference type="RefSeq" id="WP_011045820.1">
    <property type="nucleotide sequence ID" value="NC_003911.12"/>
</dbReference>
<dbReference type="SMR" id="Q5LWJ1"/>
<dbReference type="STRING" id="246200.SPO0047"/>
<dbReference type="PaxDb" id="246200-SPO0047"/>
<dbReference type="KEGG" id="sil:SPO0047"/>
<dbReference type="eggNOG" id="COG2022">
    <property type="taxonomic scope" value="Bacteria"/>
</dbReference>
<dbReference type="HOGENOM" id="CLU_062233_1_0_5"/>
<dbReference type="OrthoDB" id="9805935at2"/>
<dbReference type="UniPathway" id="UPA00060"/>
<dbReference type="Proteomes" id="UP000001023">
    <property type="component" value="Chromosome"/>
</dbReference>
<dbReference type="GO" id="GO:0005737">
    <property type="term" value="C:cytoplasm"/>
    <property type="evidence" value="ECO:0007669"/>
    <property type="project" value="UniProtKB-SubCell"/>
</dbReference>
<dbReference type="GO" id="GO:1990107">
    <property type="term" value="F:thiazole synthase activity"/>
    <property type="evidence" value="ECO:0007669"/>
    <property type="project" value="UniProtKB-EC"/>
</dbReference>
<dbReference type="GO" id="GO:0009229">
    <property type="term" value="P:thiamine diphosphate biosynthetic process"/>
    <property type="evidence" value="ECO:0007669"/>
    <property type="project" value="UniProtKB-UniRule"/>
</dbReference>
<dbReference type="CDD" id="cd04728">
    <property type="entry name" value="ThiG"/>
    <property type="match status" value="1"/>
</dbReference>
<dbReference type="Gene3D" id="3.20.20.70">
    <property type="entry name" value="Aldolase class I"/>
    <property type="match status" value="1"/>
</dbReference>
<dbReference type="HAMAP" id="MF_00443">
    <property type="entry name" value="ThiG"/>
    <property type="match status" value="1"/>
</dbReference>
<dbReference type="InterPro" id="IPR013785">
    <property type="entry name" value="Aldolase_TIM"/>
</dbReference>
<dbReference type="InterPro" id="IPR033983">
    <property type="entry name" value="Thiazole_synthase_ThiG"/>
</dbReference>
<dbReference type="InterPro" id="IPR008867">
    <property type="entry name" value="ThiG"/>
</dbReference>
<dbReference type="PANTHER" id="PTHR34266">
    <property type="entry name" value="THIAZOLE SYNTHASE"/>
    <property type="match status" value="1"/>
</dbReference>
<dbReference type="PANTHER" id="PTHR34266:SF2">
    <property type="entry name" value="THIAZOLE SYNTHASE"/>
    <property type="match status" value="1"/>
</dbReference>
<dbReference type="Pfam" id="PF05690">
    <property type="entry name" value="ThiG"/>
    <property type="match status" value="1"/>
</dbReference>
<dbReference type="SUPFAM" id="SSF110399">
    <property type="entry name" value="ThiG-like"/>
    <property type="match status" value="1"/>
</dbReference>
<proteinExistence type="inferred from homology"/>